<gene>
    <name evidence="2" type="primary">tuf1</name>
    <name type="ordered locus">Shew185_0182</name>
</gene>
<gene>
    <name evidence="2" type="primary">tuf2</name>
    <name type="ordered locus">Shew185_0194</name>
</gene>
<sequence length="394" mass="43335">MAKAKFERIKPHVNVGTIGHVDHGKTTLTAAISHVLAKTYGGEAKDFSQIDNAPEERERGITINTSHIEYDTPSRHYAHVDCPGHADYVKNMITGAAQMDGAILVVASTDGPMPQTREHILLSRQVGVPYIIVFMNKCDMVDDEELLELVEMEVRELLSEYDFPGDDLPVIQGSALKALEGQPEWEAKIIELANALDSYIPEPQRDIDKPFLLPIEDVFSISGRGTVVTGRVERGIVKVGDEVEIVGVRTTTKTTCTGVEMFRKLLDEGRAGENCGVLLRGTKRDDVERGQVLAKPGSINPHTTFESEVYVLSKEEGGRHTPFFKGYRPQFYFRTTDVTGTIELPEGVEMVMPGDNIKMVVTLICPIAMDEGLRFAIREGGRTVGAGVVAKIIA</sequence>
<protein>
    <recommendedName>
        <fullName evidence="2">Elongation factor Tu</fullName>
        <shortName evidence="2">EF-Tu</shortName>
        <ecNumber evidence="2">3.6.5.3</ecNumber>
    </recommendedName>
</protein>
<evidence type="ECO:0000250" key="1"/>
<evidence type="ECO:0000255" key="2">
    <source>
        <dbReference type="HAMAP-Rule" id="MF_00118"/>
    </source>
</evidence>
<accession>A6WHR4</accession>
<feature type="chain" id="PRO_0000337521" description="Elongation factor Tu">
    <location>
        <begin position="1"/>
        <end position="394"/>
    </location>
</feature>
<feature type="domain" description="tr-type G">
    <location>
        <begin position="10"/>
        <end position="204"/>
    </location>
</feature>
<feature type="region of interest" description="G1" evidence="1">
    <location>
        <begin position="19"/>
        <end position="26"/>
    </location>
</feature>
<feature type="region of interest" description="G2" evidence="1">
    <location>
        <begin position="60"/>
        <end position="64"/>
    </location>
</feature>
<feature type="region of interest" description="G3" evidence="1">
    <location>
        <begin position="81"/>
        <end position="84"/>
    </location>
</feature>
<feature type="region of interest" description="G4" evidence="1">
    <location>
        <begin position="136"/>
        <end position="139"/>
    </location>
</feature>
<feature type="region of interest" description="G5" evidence="1">
    <location>
        <begin position="174"/>
        <end position="176"/>
    </location>
</feature>
<feature type="binding site" evidence="2">
    <location>
        <begin position="19"/>
        <end position="26"/>
    </location>
    <ligand>
        <name>GTP</name>
        <dbReference type="ChEBI" id="CHEBI:37565"/>
    </ligand>
</feature>
<feature type="binding site" evidence="2">
    <location>
        <position position="26"/>
    </location>
    <ligand>
        <name>Mg(2+)</name>
        <dbReference type="ChEBI" id="CHEBI:18420"/>
    </ligand>
</feature>
<feature type="binding site" evidence="2">
    <location>
        <begin position="81"/>
        <end position="85"/>
    </location>
    <ligand>
        <name>GTP</name>
        <dbReference type="ChEBI" id="CHEBI:37565"/>
    </ligand>
</feature>
<feature type="binding site" evidence="2">
    <location>
        <begin position="136"/>
        <end position="139"/>
    </location>
    <ligand>
        <name>GTP</name>
        <dbReference type="ChEBI" id="CHEBI:37565"/>
    </ligand>
</feature>
<name>EFTU_SHEB8</name>
<comment type="function">
    <text evidence="2">GTP hydrolase that promotes the GTP-dependent binding of aminoacyl-tRNA to the A-site of ribosomes during protein biosynthesis.</text>
</comment>
<comment type="catalytic activity">
    <reaction evidence="2">
        <text>GTP + H2O = GDP + phosphate + H(+)</text>
        <dbReference type="Rhea" id="RHEA:19669"/>
        <dbReference type="ChEBI" id="CHEBI:15377"/>
        <dbReference type="ChEBI" id="CHEBI:15378"/>
        <dbReference type="ChEBI" id="CHEBI:37565"/>
        <dbReference type="ChEBI" id="CHEBI:43474"/>
        <dbReference type="ChEBI" id="CHEBI:58189"/>
        <dbReference type="EC" id="3.6.5.3"/>
    </reaction>
    <physiologicalReaction direction="left-to-right" evidence="2">
        <dbReference type="Rhea" id="RHEA:19670"/>
    </physiologicalReaction>
</comment>
<comment type="subunit">
    <text evidence="2">Monomer.</text>
</comment>
<comment type="subcellular location">
    <subcellularLocation>
        <location evidence="2">Cytoplasm</location>
    </subcellularLocation>
</comment>
<comment type="similarity">
    <text evidence="2">Belongs to the TRAFAC class translation factor GTPase superfamily. Classic translation factor GTPase family. EF-Tu/EF-1A subfamily.</text>
</comment>
<organism>
    <name type="scientific">Shewanella baltica (strain OS185)</name>
    <dbReference type="NCBI Taxonomy" id="402882"/>
    <lineage>
        <taxon>Bacteria</taxon>
        <taxon>Pseudomonadati</taxon>
        <taxon>Pseudomonadota</taxon>
        <taxon>Gammaproteobacteria</taxon>
        <taxon>Alteromonadales</taxon>
        <taxon>Shewanellaceae</taxon>
        <taxon>Shewanella</taxon>
    </lineage>
</organism>
<proteinExistence type="inferred from homology"/>
<dbReference type="EC" id="3.6.5.3" evidence="2"/>
<dbReference type="EMBL" id="CP000753">
    <property type="protein sequence ID" value="ABS06353.1"/>
    <property type="molecule type" value="Genomic_DNA"/>
</dbReference>
<dbReference type="EMBL" id="CP000753">
    <property type="protein sequence ID" value="ABS06365.1"/>
    <property type="molecule type" value="Genomic_DNA"/>
</dbReference>
<dbReference type="SMR" id="A6WHR4"/>
<dbReference type="KEGG" id="sbm:Shew185_0182"/>
<dbReference type="KEGG" id="sbm:Shew185_0194"/>
<dbReference type="HOGENOM" id="CLU_007265_0_1_6"/>
<dbReference type="GO" id="GO:0005829">
    <property type="term" value="C:cytosol"/>
    <property type="evidence" value="ECO:0007669"/>
    <property type="project" value="TreeGrafter"/>
</dbReference>
<dbReference type="GO" id="GO:0005525">
    <property type="term" value="F:GTP binding"/>
    <property type="evidence" value="ECO:0007669"/>
    <property type="project" value="UniProtKB-UniRule"/>
</dbReference>
<dbReference type="GO" id="GO:0003924">
    <property type="term" value="F:GTPase activity"/>
    <property type="evidence" value="ECO:0007669"/>
    <property type="project" value="InterPro"/>
</dbReference>
<dbReference type="GO" id="GO:0097216">
    <property type="term" value="F:guanosine tetraphosphate binding"/>
    <property type="evidence" value="ECO:0007669"/>
    <property type="project" value="UniProtKB-ARBA"/>
</dbReference>
<dbReference type="GO" id="GO:0003746">
    <property type="term" value="F:translation elongation factor activity"/>
    <property type="evidence" value="ECO:0007669"/>
    <property type="project" value="UniProtKB-UniRule"/>
</dbReference>
<dbReference type="CDD" id="cd01884">
    <property type="entry name" value="EF_Tu"/>
    <property type="match status" value="1"/>
</dbReference>
<dbReference type="CDD" id="cd03697">
    <property type="entry name" value="EFTU_II"/>
    <property type="match status" value="1"/>
</dbReference>
<dbReference type="CDD" id="cd03707">
    <property type="entry name" value="EFTU_III"/>
    <property type="match status" value="1"/>
</dbReference>
<dbReference type="FunFam" id="2.40.30.10:FF:000001">
    <property type="entry name" value="Elongation factor Tu"/>
    <property type="match status" value="1"/>
</dbReference>
<dbReference type="FunFam" id="3.40.50.300:FF:000003">
    <property type="entry name" value="Elongation factor Tu"/>
    <property type="match status" value="1"/>
</dbReference>
<dbReference type="Gene3D" id="3.40.50.300">
    <property type="entry name" value="P-loop containing nucleotide triphosphate hydrolases"/>
    <property type="match status" value="1"/>
</dbReference>
<dbReference type="Gene3D" id="2.40.30.10">
    <property type="entry name" value="Translation factors"/>
    <property type="match status" value="2"/>
</dbReference>
<dbReference type="HAMAP" id="MF_00118_B">
    <property type="entry name" value="EF_Tu_B"/>
    <property type="match status" value="1"/>
</dbReference>
<dbReference type="InterPro" id="IPR041709">
    <property type="entry name" value="EF-Tu_GTP-bd"/>
</dbReference>
<dbReference type="InterPro" id="IPR050055">
    <property type="entry name" value="EF-Tu_GTPase"/>
</dbReference>
<dbReference type="InterPro" id="IPR004161">
    <property type="entry name" value="EFTu-like_2"/>
</dbReference>
<dbReference type="InterPro" id="IPR033720">
    <property type="entry name" value="EFTU_2"/>
</dbReference>
<dbReference type="InterPro" id="IPR031157">
    <property type="entry name" value="G_TR_CS"/>
</dbReference>
<dbReference type="InterPro" id="IPR027417">
    <property type="entry name" value="P-loop_NTPase"/>
</dbReference>
<dbReference type="InterPro" id="IPR005225">
    <property type="entry name" value="Small_GTP-bd"/>
</dbReference>
<dbReference type="InterPro" id="IPR000795">
    <property type="entry name" value="T_Tr_GTP-bd_dom"/>
</dbReference>
<dbReference type="InterPro" id="IPR009000">
    <property type="entry name" value="Transl_B-barrel_sf"/>
</dbReference>
<dbReference type="InterPro" id="IPR009001">
    <property type="entry name" value="Transl_elong_EF1A/Init_IF2_C"/>
</dbReference>
<dbReference type="InterPro" id="IPR004541">
    <property type="entry name" value="Transl_elong_EFTu/EF1A_bac/org"/>
</dbReference>
<dbReference type="InterPro" id="IPR004160">
    <property type="entry name" value="Transl_elong_EFTu/EF1A_C"/>
</dbReference>
<dbReference type="NCBIfam" id="TIGR00485">
    <property type="entry name" value="EF-Tu"/>
    <property type="match status" value="1"/>
</dbReference>
<dbReference type="NCBIfam" id="NF000766">
    <property type="entry name" value="PRK00049.1"/>
    <property type="match status" value="1"/>
</dbReference>
<dbReference type="NCBIfam" id="NF009372">
    <property type="entry name" value="PRK12735.1"/>
    <property type="match status" value="1"/>
</dbReference>
<dbReference type="NCBIfam" id="NF009373">
    <property type="entry name" value="PRK12736.1"/>
    <property type="match status" value="1"/>
</dbReference>
<dbReference type="NCBIfam" id="TIGR00231">
    <property type="entry name" value="small_GTP"/>
    <property type="match status" value="1"/>
</dbReference>
<dbReference type="PANTHER" id="PTHR43721:SF22">
    <property type="entry name" value="ELONGATION FACTOR TU, MITOCHONDRIAL"/>
    <property type="match status" value="1"/>
</dbReference>
<dbReference type="PANTHER" id="PTHR43721">
    <property type="entry name" value="ELONGATION FACTOR TU-RELATED"/>
    <property type="match status" value="1"/>
</dbReference>
<dbReference type="Pfam" id="PF00009">
    <property type="entry name" value="GTP_EFTU"/>
    <property type="match status" value="1"/>
</dbReference>
<dbReference type="Pfam" id="PF03144">
    <property type="entry name" value="GTP_EFTU_D2"/>
    <property type="match status" value="1"/>
</dbReference>
<dbReference type="Pfam" id="PF03143">
    <property type="entry name" value="GTP_EFTU_D3"/>
    <property type="match status" value="1"/>
</dbReference>
<dbReference type="PRINTS" id="PR00315">
    <property type="entry name" value="ELONGATNFCT"/>
</dbReference>
<dbReference type="SUPFAM" id="SSF50465">
    <property type="entry name" value="EF-Tu/eEF-1alpha/eIF2-gamma C-terminal domain"/>
    <property type="match status" value="1"/>
</dbReference>
<dbReference type="SUPFAM" id="SSF52540">
    <property type="entry name" value="P-loop containing nucleoside triphosphate hydrolases"/>
    <property type="match status" value="1"/>
</dbReference>
<dbReference type="SUPFAM" id="SSF50447">
    <property type="entry name" value="Translation proteins"/>
    <property type="match status" value="1"/>
</dbReference>
<dbReference type="PROSITE" id="PS00301">
    <property type="entry name" value="G_TR_1"/>
    <property type="match status" value="1"/>
</dbReference>
<dbReference type="PROSITE" id="PS51722">
    <property type="entry name" value="G_TR_2"/>
    <property type="match status" value="1"/>
</dbReference>
<keyword id="KW-0963">Cytoplasm</keyword>
<keyword id="KW-0251">Elongation factor</keyword>
<keyword id="KW-0342">GTP-binding</keyword>
<keyword id="KW-0378">Hydrolase</keyword>
<keyword id="KW-0460">Magnesium</keyword>
<keyword id="KW-0479">Metal-binding</keyword>
<keyword id="KW-0547">Nucleotide-binding</keyword>
<keyword id="KW-0648">Protein biosynthesis</keyword>
<reference key="1">
    <citation type="submission" date="2007-07" db="EMBL/GenBank/DDBJ databases">
        <title>Complete sequence of chromosome of Shewanella baltica OS185.</title>
        <authorList>
            <consortium name="US DOE Joint Genome Institute"/>
            <person name="Copeland A."/>
            <person name="Lucas S."/>
            <person name="Lapidus A."/>
            <person name="Barry K."/>
            <person name="Glavina del Rio T."/>
            <person name="Dalin E."/>
            <person name="Tice H."/>
            <person name="Pitluck S."/>
            <person name="Sims D."/>
            <person name="Brettin T."/>
            <person name="Bruce D."/>
            <person name="Detter J.C."/>
            <person name="Han C."/>
            <person name="Schmutz J."/>
            <person name="Larimer F."/>
            <person name="Land M."/>
            <person name="Hauser L."/>
            <person name="Kyrpides N."/>
            <person name="Mikhailova N."/>
            <person name="Brettar I."/>
            <person name="Rodrigues J."/>
            <person name="Konstantinidis K."/>
            <person name="Tiedje J."/>
            <person name="Richardson P."/>
        </authorList>
    </citation>
    <scope>NUCLEOTIDE SEQUENCE [LARGE SCALE GENOMIC DNA]</scope>
    <source>
        <strain>OS185</strain>
    </source>
</reference>